<evidence type="ECO:0000255" key="1">
    <source>
        <dbReference type="HAMAP-Rule" id="MF_00394"/>
    </source>
</evidence>
<reference key="1">
    <citation type="journal article" date="2009" name="J. Bacteriol.">
        <title>Genomic sequencing reveals regulatory mutations and recombinational events in the widely used MC4100 lineage of Escherichia coli K-12.</title>
        <authorList>
            <person name="Ferenci T."/>
            <person name="Zhou Z."/>
            <person name="Betteridge T."/>
            <person name="Ren Y."/>
            <person name="Liu Y."/>
            <person name="Feng L."/>
            <person name="Reeves P.R."/>
            <person name="Wang L."/>
        </authorList>
    </citation>
    <scope>NUCLEOTIDE SEQUENCE [LARGE SCALE GENOMIC DNA]</scope>
    <source>
        <strain>K12 / MC4100 / BW2952</strain>
    </source>
</reference>
<protein>
    <recommendedName>
        <fullName evidence="1">Glycerol-3-phosphate dehydrogenase [NAD(P)+]</fullName>
        <ecNumber evidence="1">1.1.1.94</ecNumber>
    </recommendedName>
    <alternativeName>
        <fullName evidence="1">NAD(P)(+)-dependent glycerol-3-phosphate dehydrogenase</fullName>
    </alternativeName>
    <alternativeName>
        <fullName evidence="1">NAD(P)H-dependent dihydroxyacetone-phosphate reductase</fullName>
    </alternativeName>
</protein>
<organism>
    <name type="scientific">Escherichia coli (strain K12 / MC4100 / BW2952)</name>
    <dbReference type="NCBI Taxonomy" id="595496"/>
    <lineage>
        <taxon>Bacteria</taxon>
        <taxon>Pseudomonadati</taxon>
        <taxon>Pseudomonadota</taxon>
        <taxon>Gammaproteobacteria</taxon>
        <taxon>Enterobacterales</taxon>
        <taxon>Enterobacteriaceae</taxon>
        <taxon>Escherichia</taxon>
    </lineage>
</organism>
<proteinExistence type="inferred from homology"/>
<sequence length="339" mass="36362">MNQRNASMTVIGAGSYGTALAITLARNGHEVVLWGHDPEHIATLERDRCNAAFLPDVPFPDTLHLESDLATALAASRNILVVVPSHVFGEVLRQIKPLMRPDARLVWATKGLEAETGRLLQDVAREALGDQIPLAVISGPTFAKELAAGLPTAISLASTDQTFADDLQQLLHCGKSFRVYSNPDFIGVQLGGAVKNVIAIGAGMSDGIGFGANARTALITRGLAEMSRLGAALGADPATFMGMAGLGDLVLTCTDNQSRNRRFGMMLGQGMDVQSAQEKIGQVVEGYRNTKEVRELAHRFGVEMPITEEIYQVLYCGKNAREAALTLLGRARKDERSSH</sequence>
<accession>C4ZXK0</accession>
<dbReference type="EC" id="1.1.1.94" evidence="1"/>
<dbReference type="EMBL" id="CP001396">
    <property type="protein sequence ID" value="ACR63357.1"/>
    <property type="molecule type" value="Genomic_DNA"/>
</dbReference>
<dbReference type="RefSeq" id="WP_001076194.1">
    <property type="nucleotide sequence ID" value="NC_012759.1"/>
</dbReference>
<dbReference type="SMR" id="C4ZXK0"/>
<dbReference type="GeneID" id="93778322"/>
<dbReference type="KEGG" id="ebw:BWG_3299"/>
<dbReference type="HOGENOM" id="CLU_033449_0_2_6"/>
<dbReference type="UniPathway" id="UPA00940"/>
<dbReference type="GO" id="GO:0005829">
    <property type="term" value="C:cytosol"/>
    <property type="evidence" value="ECO:0007669"/>
    <property type="project" value="TreeGrafter"/>
</dbReference>
<dbReference type="GO" id="GO:0047952">
    <property type="term" value="F:glycerol-3-phosphate dehydrogenase [NAD(P)+] activity"/>
    <property type="evidence" value="ECO:0007669"/>
    <property type="project" value="UniProtKB-UniRule"/>
</dbReference>
<dbReference type="GO" id="GO:0051287">
    <property type="term" value="F:NAD binding"/>
    <property type="evidence" value="ECO:0007669"/>
    <property type="project" value="InterPro"/>
</dbReference>
<dbReference type="GO" id="GO:0005975">
    <property type="term" value="P:carbohydrate metabolic process"/>
    <property type="evidence" value="ECO:0007669"/>
    <property type="project" value="InterPro"/>
</dbReference>
<dbReference type="GO" id="GO:0046167">
    <property type="term" value="P:glycerol-3-phosphate biosynthetic process"/>
    <property type="evidence" value="ECO:0007669"/>
    <property type="project" value="UniProtKB-UniRule"/>
</dbReference>
<dbReference type="GO" id="GO:0046168">
    <property type="term" value="P:glycerol-3-phosphate catabolic process"/>
    <property type="evidence" value="ECO:0007669"/>
    <property type="project" value="InterPro"/>
</dbReference>
<dbReference type="GO" id="GO:0046474">
    <property type="term" value="P:glycerophospholipid biosynthetic process"/>
    <property type="evidence" value="ECO:0007669"/>
    <property type="project" value="TreeGrafter"/>
</dbReference>
<dbReference type="FunFam" id="1.10.1040.10:FF:000001">
    <property type="entry name" value="Glycerol-3-phosphate dehydrogenase [NAD(P)+]"/>
    <property type="match status" value="1"/>
</dbReference>
<dbReference type="FunFam" id="3.40.50.720:FF:000019">
    <property type="entry name" value="Glycerol-3-phosphate dehydrogenase [NAD(P)+]"/>
    <property type="match status" value="1"/>
</dbReference>
<dbReference type="Gene3D" id="1.10.1040.10">
    <property type="entry name" value="N-(1-d-carboxylethyl)-l-norvaline Dehydrogenase, domain 2"/>
    <property type="match status" value="1"/>
</dbReference>
<dbReference type="Gene3D" id="3.40.50.720">
    <property type="entry name" value="NAD(P)-binding Rossmann-like Domain"/>
    <property type="match status" value="1"/>
</dbReference>
<dbReference type="HAMAP" id="MF_00394">
    <property type="entry name" value="NAD_Glyc3P_dehydrog"/>
    <property type="match status" value="1"/>
</dbReference>
<dbReference type="InterPro" id="IPR008927">
    <property type="entry name" value="6-PGluconate_DH-like_C_sf"/>
</dbReference>
<dbReference type="InterPro" id="IPR013328">
    <property type="entry name" value="6PGD_dom2"/>
</dbReference>
<dbReference type="InterPro" id="IPR006168">
    <property type="entry name" value="G3P_DH_NAD-dep"/>
</dbReference>
<dbReference type="InterPro" id="IPR006109">
    <property type="entry name" value="G3P_DH_NAD-dep_C"/>
</dbReference>
<dbReference type="InterPro" id="IPR011128">
    <property type="entry name" value="G3P_DH_NAD-dep_N"/>
</dbReference>
<dbReference type="InterPro" id="IPR036291">
    <property type="entry name" value="NAD(P)-bd_dom_sf"/>
</dbReference>
<dbReference type="NCBIfam" id="NF000939">
    <property type="entry name" value="PRK00094.1-1"/>
    <property type="match status" value="1"/>
</dbReference>
<dbReference type="NCBIfam" id="NF000940">
    <property type="entry name" value="PRK00094.1-2"/>
    <property type="match status" value="1"/>
</dbReference>
<dbReference type="NCBIfam" id="NF000942">
    <property type="entry name" value="PRK00094.1-4"/>
    <property type="match status" value="1"/>
</dbReference>
<dbReference type="PANTHER" id="PTHR11728">
    <property type="entry name" value="GLYCEROL-3-PHOSPHATE DEHYDROGENASE"/>
    <property type="match status" value="1"/>
</dbReference>
<dbReference type="PANTHER" id="PTHR11728:SF1">
    <property type="entry name" value="GLYCEROL-3-PHOSPHATE DEHYDROGENASE [NAD(+)] 2, CHLOROPLASTIC"/>
    <property type="match status" value="1"/>
</dbReference>
<dbReference type="Pfam" id="PF07479">
    <property type="entry name" value="NAD_Gly3P_dh_C"/>
    <property type="match status" value="1"/>
</dbReference>
<dbReference type="Pfam" id="PF01210">
    <property type="entry name" value="NAD_Gly3P_dh_N"/>
    <property type="match status" value="1"/>
</dbReference>
<dbReference type="PIRSF" id="PIRSF000114">
    <property type="entry name" value="Glycerol-3-P_dh"/>
    <property type="match status" value="1"/>
</dbReference>
<dbReference type="PRINTS" id="PR00077">
    <property type="entry name" value="GPDHDRGNASE"/>
</dbReference>
<dbReference type="SUPFAM" id="SSF48179">
    <property type="entry name" value="6-phosphogluconate dehydrogenase C-terminal domain-like"/>
    <property type="match status" value="1"/>
</dbReference>
<dbReference type="SUPFAM" id="SSF51735">
    <property type="entry name" value="NAD(P)-binding Rossmann-fold domains"/>
    <property type="match status" value="1"/>
</dbReference>
<dbReference type="PROSITE" id="PS00957">
    <property type="entry name" value="NAD_G3PDH"/>
    <property type="match status" value="1"/>
</dbReference>
<feature type="chain" id="PRO_1000205857" description="Glycerol-3-phosphate dehydrogenase [NAD(P)+]">
    <location>
        <begin position="1"/>
        <end position="339"/>
    </location>
</feature>
<feature type="active site" description="Proton acceptor" evidence="1">
    <location>
        <position position="195"/>
    </location>
</feature>
<feature type="binding site" evidence="1">
    <location>
        <position position="15"/>
    </location>
    <ligand>
        <name>NADPH</name>
        <dbReference type="ChEBI" id="CHEBI:57783"/>
    </ligand>
</feature>
<feature type="binding site" evidence="1">
    <location>
        <position position="16"/>
    </location>
    <ligand>
        <name>NADPH</name>
        <dbReference type="ChEBI" id="CHEBI:57783"/>
    </ligand>
</feature>
<feature type="binding site" evidence="1">
    <location>
        <position position="36"/>
    </location>
    <ligand>
        <name>NADPH</name>
        <dbReference type="ChEBI" id="CHEBI:57783"/>
    </ligand>
</feature>
<feature type="binding site" evidence="1">
    <location>
        <position position="110"/>
    </location>
    <ligand>
        <name>NADPH</name>
        <dbReference type="ChEBI" id="CHEBI:57783"/>
    </ligand>
</feature>
<feature type="binding site" evidence="1">
    <location>
        <position position="110"/>
    </location>
    <ligand>
        <name>sn-glycerol 3-phosphate</name>
        <dbReference type="ChEBI" id="CHEBI:57597"/>
    </ligand>
</feature>
<feature type="binding site" evidence="1">
    <location>
        <position position="139"/>
    </location>
    <ligand>
        <name>sn-glycerol 3-phosphate</name>
        <dbReference type="ChEBI" id="CHEBI:57597"/>
    </ligand>
</feature>
<feature type="binding site" evidence="1">
    <location>
        <position position="141"/>
    </location>
    <ligand>
        <name>sn-glycerol 3-phosphate</name>
        <dbReference type="ChEBI" id="CHEBI:57597"/>
    </ligand>
</feature>
<feature type="binding site" evidence="1">
    <location>
        <position position="143"/>
    </location>
    <ligand>
        <name>NADPH</name>
        <dbReference type="ChEBI" id="CHEBI:57783"/>
    </ligand>
</feature>
<feature type="binding site" evidence="1">
    <location>
        <position position="195"/>
    </location>
    <ligand>
        <name>sn-glycerol 3-phosphate</name>
        <dbReference type="ChEBI" id="CHEBI:57597"/>
    </ligand>
</feature>
<feature type="binding site" evidence="1">
    <location>
        <position position="248"/>
    </location>
    <ligand>
        <name>sn-glycerol 3-phosphate</name>
        <dbReference type="ChEBI" id="CHEBI:57597"/>
    </ligand>
</feature>
<feature type="binding site" evidence="1">
    <location>
        <position position="258"/>
    </location>
    <ligand>
        <name>sn-glycerol 3-phosphate</name>
        <dbReference type="ChEBI" id="CHEBI:57597"/>
    </ligand>
</feature>
<feature type="binding site" evidence="1">
    <location>
        <position position="259"/>
    </location>
    <ligand>
        <name>NADPH</name>
        <dbReference type="ChEBI" id="CHEBI:57783"/>
    </ligand>
</feature>
<feature type="binding site" evidence="1">
    <location>
        <position position="259"/>
    </location>
    <ligand>
        <name>sn-glycerol 3-phosphate</name>
        <dbReference type="ChEBI" id="CHEBI:57597"/>
    </ligand>
</feature>
<feature type="binding site" evidence="1">
    <location>
        <position position="260"/>
    </location>
    <ligand>
        <name>sn-glycerol 3-phosphate</name>
        <dbReference type="ChEBI" id="CHEBI:57597"/>
    </ligand>
</feature>
<feature type="binding site" evidence="1">
    <location>
        <position position="283"/>
    </location>
    <ligand>
        <name>NADPH</name>
        <dbReference type="ChEBI" id="CHEBI:57783"/>
    </ligand>
</feature>
<feature type="binding site" evidence="1">
    <location>
        <position position="285"/>
    </location>
    <ligand>
        <name>NADPH</name>
        <dbReference type="ChEBI" id="CHEBI:57783"/>
    </ligand>
</feature>
<comment type="function">
    <text evidence="1">Catalyzes the reduction of the glycolytic intermediate dihydroxyacetone phosphate (DHAP) to sn-glycerol 3-phosphate (G3P), the key precursor for phospholipid synthesis.</text>
</comment>
<comment type="catalytic activity">
    <reaction evidence="1">
        <text>sn-glycerol 3-phosphate + NAD(+) = dihydroxyacetone phosphate + NADH + H(+)</text>
        <dbReference type="Rhea" id="RHEA:11092"/>
        <dbReference type="ChEBI" id="CHEBI:15378"/>
        <dbReference type="ChEBI" id="CHEBI:57540"/>
        <dbReference type="ChEBI" id="CHEBI:57597"/>
        <dbReference type="ChEBI" id="CHEBI:57642"/>
        <dbReference type="ChEBI" id="CHEBI:57945"/>
        <dbReference type="EC" id="1.1.1.94"/>
    </reaction>
    <physiologicalReaction direction="right-to-left" evidence="1">
        <dbReference type="Rhea" id="RHEA:11094"/>
    </physiologicalReaction>
</comment>
<comment type="catalytic activity">
    <reaction evidence="1">
        <text>sn-glycerol 3-phosphate + NADP(+) = dihydroxyacetone phosphate + NADPH + H(+)</text>
        <dbReference type="Rhea" id="RHEA:11096"/>
        <dbReference type="ChEBI" id="CHEBI:15378"/>
        <dbReference type="ChEBI" id="CHEBI:57597"/>
        <dbReference type="ChEBI" id="CHEBI:57642"/>
        <dbReference type="ChEBI" id="CHEBI:57783"/>
        <dbReference type="ChEBI" id="CHEBI:58349"/>
        <dbReference type="EC" id="1.1.1.94"/>
    </reaction>
    <physiologicalReaction direction="right-to-left" evidence="1">
        <dbReference type="Rhea" id="RHEA:11098"/>
    </physiologicalReaction>
</comment>
<comment type="pathway">
    <text evidence="1">Membrane lipid metabolism; glycerophospholipid metabolism.</text>
</comment>
<comment type="subcellular location">
    <subcellularLocation>
        <location evidence="1">Cytoplasm</location>
    </subcellularLocation>
</comment>
<comment type="similarity">
    <text evidence="1">Belongs to the NAD-dependent glycerol-3-phosphate dehydrogenase family.</text>
</comment>
<name>GPDA_ECOBW</name>
<gene>
    <name evidence="1" type="primary">gpsA</name>
    <name type="ordered locus">BWG_3299</name>
</gene>
<keyword id="KW-0963">Cytoplasm</keyword>
<keyword id="KW-0444">Lipid biosynthesis</keyword>
<keyword id="KW-0443">Lipid metabolism</keyword>
<keyword id="KW-0520">NAD</keyword>
<keyword id="KW-0521">NADP</keyword>
<keyword id="KW-0547">Nucleotide-binding</keyword>
<keyword id="KW-0560">Oxidoreductase</keyword>
<keyword id="KW-0594">Phospholipid biosynthesis</keyword>
<keyword id="KW-1208">Phospholipid metabolism</keyword>